<protein>
    <recommendedName>
        <fullName evidence="1">Probable cobyric acid synthase</fullName>
    </recommendedName>
</protein>
<sequence>MAKFIMVVGTSSNSGKTVLVSGICRMLSNKGYKVAPFKSQNMSLNSRVSVEDGEIAVAQYTQAMAARAEPSVHFNPILLKPKGNFVSQVIVHGNPYEDKDYNEYRSKKDDFLVKIKESIDYLDKNYDYVVIEGAGSCCEINLLNDDIANLKVAEIAGADAILVSDIDRGGVFASIYGTVQLLPENWKKLLKGFVINKFRGNIDVLKDGFEKIEELTNIPVIGTIPYDETLVLPEEDSQALDGKRVFGNLKSPIEVNVVKFSKIANFTDVDPFSSDCLMKYIDFNENITGDILILPGTRCSTVEMDLMKKYGMDKKILEFVENGGIVLGICGGYQALGKMLFDEDFSEGDVGTISGLGLFDMETTFGNKKAIKNSTGKISIFNQNFDVSGYELHEGYSVSNETPLISLSKGFGNCGDSYDGSFKMIGDSYIFGTYFHGILENFEFRNYLVNLARSKKNLSKIEDDTYAELFNENMDKLSKIIEENLDFSKIIG</sequence>
<evidence type="ECO:0000255" key="1">
    <source>
        <dbReference type="HAMAP-Rule" id="MF_00028"/>
    </source>
</evidence>
<feature type="chain" id="PRO_0000141351" description="Probable cobyric acid synthase">
    <location>
        <begin position="1"/>
        <end position="492"/>
    </location>
</feature>
<feature type="domain" description="GATase cobBQ-type" evidence="1">
    <location>
        <begin position="252"/>
        <end position="444"/>
    </location>
</feature>
<feature type="active site" description="Nucleophile" evidence="1">
    <location>
        <position position="330"/>
    </location>
</feature>
<feature type="active site" evidence="1">
    <location>
        <position position="436"/>
    </location>
</feature>
<proteinExistence type="inferred from homology"/>
<accession>Q6LXX9</accession>
<keyword id="KW-0169">Cobalamin biosynthesis</keyword>
<keyword id="KW-0315">Glutamine amidotransferase</keyword>
<keyword id="KW-1185">Reference proteome</keyword>
<name>COBQ_METMP</name>
<organism>
    <name type="scientific">Methanococcus maripaludis (strain DSM 14266 / JCM 13030 / NBRC 101832 / S2 / LL)</name>
    <dbReference type="NCBI Taxonomy" id="267377"/>
    <lineage>
        <taxon>Archaea</taxon>
        <taxon>Methanobacteriati</taxon>
        <taxon>Methanobacteriota</taxon>
        <taxon>Methanomada group</taxon>
        <taxon>Methanococci</taxon>
        <taxon>Methanococcales</taxon>
        <taxon>Methanococcaceae</taxon>
        <taxon>Methanococcus</taxon>
    </lineage>
</organism>
<gene>
    <name evidence="1" type="primary">cobQ</name>
    <name type="ordered locus">MMP1215</name>
</gene>
<reference key="1">
    <citation type="journal article" date="2004" name="J. Bacteriol.">
        <title>Complete genome sequence of the genetically tractable hydrogenotrophic methanogen Methanococcus maripaludis.</title>
        <authorList>
            <person name="Hendrickson E.L."/>
            <person name="Kaul R."/>
            <person name="Zhou Y."/>
            <person name="Bovee D."/>
            <person name="Chapman P."/>
            <person name="Chung J."/>
            <person name="Conway de Macario E."/>
            <person name="Dodsworth J.A."/>
            <person name="Gillett W."/>
            <person name="Graham D.E."/>
            <person name="Hackett M."/>
            <person name="Haydock A.K."/>
            <person name="Kang A."/>
            <person name="Land M.L."/>
            <person name="Levy R."/>
            <person name="Lie T.J."/>
            <person name="Major T.A."/>
            <person name="Moore B.C."/>
            <person name="Porat I."/>
            <person name="Palmeiri A."/>
            <person name="Rouse G."/>
            <person name="Saenphimmachak C."/>
            <person name="Soell D."/>
            <person name="Van Dien S."/>
            <person name="Wang T."/>
            <person name="Whitman W.B."/>
            <person name="Xia Q."/>
            <person name="Zhang Y."/>
            <person name="Larimer F.W."/>
            <person name="Olson M.V."/>
            <person name="Leigh J.A."/>
        </authorList>
    </citation>
    <scope>NUCLEOTIDE SEQUENCE [LARGE SCALE GENOMIC DNA]</scope>
    <source>
        <strain>DSM 14266 / JCM 13030 / NBRC 101832 / S2 / LL</strain>
    </source>
</reference>
<comment type="function">
    <text evidence="1">Catalyzes amidations at positions B, D, E, and G on adenosylcobyrinic A,C-diamide. NH(2) groups are provided by glutamine, and one molecule of ATP is hydrogenolyzed for each amidation.</text>
</comment>
<comment type="pathway">
    <text evidence="1">Cofactor biosynthesis; adenosylcobalamin biosynthesis.</text>
</comment>
<comment type="similarity">
    <text evidence="1">Belongs to the CobB/CobQ family. CobQ subfamily.</text>
</comment>
<dbReference type="EMBL" id="BX950229">
    <property type="protein sequence ID" value="CAF30771.1"/>
    <property type="molecule type" value="Genomic_DNA"/>
</dbReference>
<dbReference type="RefSeq" id="WP_011171159.1">
    <property type="nucleotide sequence ID" value="NC_005791.1"/>
</dbReference>
<dbReference type="SMR" id="Q6LXX9"/>
<dbReference type="STRING" id="267377.MMP1215"/>
<dbReference type="DNASU" id="2761451"/>
<dbReference type="EnsemblBacteria" id="CAF30771">
    <property type="protein sequence ID" value="CAF30771"/>
    <property type="gene ID" value="MMP1215"/>
</dbReference>
<dbReference type="GeneID" id="2761451"/>
<dbReference type="KEGG" id="mmp:MMP1215"/>
<dbReference type="PATRIC" id="fig|267377.15.peg.1248"/>
<dbReference type="eggNOG" id="arCOG00105">
    <property type="taxonomic scope" value="Archaea"/>
</dbReference>
<dbReference type="HOGENOM" id="CLU_019250_2_2_2"/>
<dbReference type="OrthoDB" id="53136at2157"/>
<dbReference type="UniPathway" id="UPA00148"/>
<dbReference type="Proteomes" id="UP000000590">
    <property type="component" value="Chromosome"/>
</dbReference>
<dbReference type="GO" id="GO:0015420">
    <property type="term" value="F:ABC-type vitamin B12 transporter activity"/>
    <property type="evidence" value="ECO:0007669"/>
    <property type="project" value="UniProtKB-UniRule"/>
</dbReference>
<dbReference type="GO" id="GO:0003824">
    <property type="term" value="F:catalytic activity"/>
    <property type="evidence" value="ECO:0007669"/>
    <property type="project" value="InterPro"/>
</dbReference>
<dbReference type="GO" id="GO:0009236">
    <property type="term" value="P:cobalamin biosynthetic process"/>
    <property type="evidence" value="ECO:0007669"/>
    <property type="project" value="UniProtKB-UniRule"/>
</dbReference>
<dbReference type="CDD" id="cd05389">
    <property type="entry name" value="CobQ_N"/>
    <property type="match status" value="1"/>
</dbReference>
<dbReference type="CDD" id="cd01750">
    <property type="entry name" value="GATase1_CobQ"/>
    <property type="match status" value="1"/>
</dbReference>
<dbReference type="Gene3D" id="3.40.50.880">
    <property type="match status" value="1"/>
</dbReference>
<dbReference type="Gene3D" id="3.40.50.300">
    <property type="entry name" value="P-loop containing nucleotide triphosphate hydrolases"/>
    <property type="match status" value="1"/>
</dbReference>
<dbReference type="HAMAP" id="MF_00028">
    <property type="entry name" value="CobQ"/>
    <property type="match status" value="1"/>
</dbReference>
<dbReference type="InterPro" id="IPR029062">
    <property type="entry name" value="Class_I_gatase-like"/>
</dbReference>
<dbReference type="InterPro" id="IPR002586">
    <property type="entry name" value="CobQ/CobB/MinD/ParA_Nub-bd_dom"/>
</dbReference>
<dbReference type="InterPro" id="IPR033949">
    <property type="entry name" value="CobQ_GATase1"/>
</dbReference>
<dbReference type="InterPro" id="IPR047045">
    <property type="entry name" value="CobQ_N"/>
</dbReference>
<dbReference type="InterPro" id="IPR004459">
    <property type="entry name" value="CobQ_synth"/>
</dbReference>
<dbReference type="InterPro" id="IPR011698">
    <property type="entry name" value="GATase_3"/>
</dbReference>
<dbReference type="InterPro" id="IPR027417">
    <property type="entry name" value="P-loop_NTPase"/>
</dbReference>
<dbReference type="NCBIfam" id="TIGR00313">
    <property type="entry name" value="cobQ"/>
    <property type="match status" value="1"/>
</dbReference>
<dbReference type="NCBIfam" id="NF001989">
    <property type="entry name" value="PRK00784.1"/>
    <property type="match status" value="1"/>
</dbReference>
<dbReference type="PANTHER" id="PTHR21343:SF1">
    <property type="entry name" value="COBYRIC ACID SYNTHASE"/>
    <property type="match status" value="1"/>
</dbReference>
<dbReference type="PANTHER" id="PTHR21343">
    <property type="entry name" value="DETHIOBIOTIN SYNTHETASE"/>
    <property type="match status" value="1"/>
</dbReference>
<dbReference type="Pfam" id="PF01656">
    <property type="entry name" value="CbiA"/>
    <property type="match status" value="1"/>
</dbReference>
<dbReference type="Pfam" id="PF07685">
    <property type="entry name" value="GATase_3"/>
    <property type="match status" value="1"/>
</dbReference>
<dbReference type="SUPFAM" id="SSF52317">
    <property type="entry name" value="Class I glutamine amidotransferase-like"/>
    <property type="match status" value="1"/>
</dbReference>
<dbReference type="SUPFAM" id="SSF52540">
    <property type="entry name" value="P-loop containing nucleoside triphosphate hydrolases"/>
    <property type="match status" value="1"/>
</dbReference>
<dbReference type="PROSITE" id="PS51274">
    <property type="entry name" value="GATASE_COBBQ"/>
    <property type="match status" value="1"/>
</dbReference>